<reference evidence="7 8" key="1">
    <citation type="journal article" date="2005" name="Zool. Sci.">
        <title>Molecular cloning of Dmrt1 and its expression in the gonad of Xenopus.</title>
        <authorList>
            <person name="Osawa N."/>
            <person name="Oshima Y."/>
            <person name="Nakamura M."/>
        </authorList>
    </citation>
    <scope>NUCLEOTIDE SEQUENCE [MRNA]</scope>
    <scope>TISSUE SPECIFICITY</scope>
    <scope>DEVELOPMENTAL STAGE</scope>
</reference>
<reference evidence="7" key="2">
    <citation type="journal article" date="2006" name="Dev. Growth Differ.">
        <title>Expression and promoter analysis of Xenopus DMRT1 and functional characterization of the transactivation property of its protein.</title>
        <authorList>
            <person name="Yoshimoto S."/>
            <person name="Okada E."/>
            <person name="Oishi T."/>
            <person name="Numagami R."/>
            <person name="Umemoto H."/>
            <person name="Tamura K."/>
            <person name="Kanda H."/>
            <person name="Shiba T."/>
            <person name="Takamatsu N."/>
            <person name="Ito M."/>
        </authorList>
    </citation>
    <scope>NUCLEOTIDE SEQUENCE [MRNA]</scope>
    <scope>FUNCTION</scope>
    <scope>TISSUE SPECIFICITY</scope>
    <scope>DEVELOPMENTAL STAGE</scope>
    <source>
        <tissue evidence="4">Gonad</tissue>
    </source>
</reference>
<reference key="3">
    <citation type="submission" date="2008-11" db="EMBL/GenBank/DDBJ databases">
        <authorList>
            <consortium name="NIH - Xenopus Gene Collection (XGC) project"/>
        </authorList>
    </citation>
    <scope>NUCLEOTIDE SEQUENCE [LARGE SCALE MRNA]</scope>
    <source>
        <tissue>Oocyte</tissue>
    </source>
</reference>
<reference key="4">
    <citation type="journal article" date="2008" name="Proc. Natl. Acad. Sci. U.S.A.">
        <title>A W-linked DM-domain gene, DM-W, participates in primary ovary development in Xenopus laevis.</title>
        <authorList>
            <person name="Yoshimoto S."/>
            <person name="Okada E."/>
            <person name="Umemoto H."/>
            <person name="Tamura K."/>
            <person name="Uno Y."/>
            <person name="Nishida-Umehara C."/>
            <person name="Matsuda Y."/>
            <person name="Takamatsu N."/>
            <person name="Shiba T."/>
            <person name="Ito M."/>
        </authorList>
    </citation>
    <scope>DEVELOPMENTAL STAGE</scope>
</reference>
<reference key="5">
    <citation type="journal article" date="2010" name="Development">
        <title>Opposite roles of DMRT1 and its W-linked paralogue, DM-W, in sexual dimorphism of Xenopus laevis: implications of a ZZ/ZW-type sex-determining system.</title>
        <authorList>
            <person name="Yoshimoto S."/>
            <person name="Ikeda N."/>
            <person name="Izutsu Y."/>
            <person name="Shiba T."/>
            <person name="Takamatsu N."/>
            <person name="Ito M."/>
        </authorList>
    </citation>
    <scope>FUNCTION</scope>
    <scope>DNA-BINDING</scope>
    <scope>TISSUE SPECIFICITY</scope>
</reference>
<proteinExistence type="evidence at protein level"/>
<name>DMT1A_XENLA</name>
<keyword id="KW-0010">Activator</keyword>
<keyword id="KW-0217">Developmental protein</keyword>
<keyword id="KW-0221">Differentiation</keyword>
<keyword id="KW-0238">DNA-binding</keyword>
<keyword id="KW-0479">Metal-binding</keyword>
<keyword id="KW-0539">Nucleus</keyword>
<keyword id="KW-1185">Reference proteome</keyword>
<keyword id="KW-0678">Repressor</keyword>
<keyword id="KW-0726">Sexual differentiation</keyword>
<keyword id="KW-0804">Transcription</keyword>
<keyword id="KW-0805">Transcription regulation</keyword>
<keyword id="KW-0862">Zinc</keyword>
<sequence length="336" mass="36999">MQNNEEPYSKTRNSGQHPSGVHTKKSPRLPKCARCRNHGYASPLKGHKRYCMWRDCQCKKCSLIAERQRVMAAQVALRRQQAQEEELGISHPIHLPIAAELLIKKEHGGSSSCLMLENSSTQTTSTPTSGSTASSEGKVLIQEIPSITSRGHMESTSDLVMDSPYYSNFYQPPLYPYYNNLYNYPPYQMAMAAESTSGNDMGGISGPPLKNNHRNHPAAYVPSQSGNQWQMKNRENRFPGHSGSSQFRMHSYYPPYLGQSVPNPACVPPFLTFEEIPSYSEAKASVLSPPSSQDSGVISLSSNSPVSNESTKAVAEQEPNSESSLFTVTTAAENGE</sequence>
<protein>
    <recommendedName>
        <fullName>Doublesex- and mab-3-related transcription factor 1A</fullName>
        <shortName>xDmrt1</shortName>
    </recommendedName>
    <alternativeName>
        <fullName>DMRT1-alpha</fullName>
    </alternativeName>
</protein>
<organism>
    <name type="scientific">Xenopus laevis</name>
    <name type="common">African clawed frog</name>
    <dbReference type="NCBI Taxonomy" id="8355"/>
    <lineage>
        <taxon>Eukaryota</taxon>
        <taxon>Metazoa</taxon>
        <taxon>Chordata</taxon>
        <taxon>Craniata</taxon>
        <taxon>Vertebrata</taxon>
        <taxon>Euteleostomi</taxon>
        <taxon>Amphibia</taxon>
        <taxon>Batrachia</taxon>
        <taxon>Anura</taxon>
        <taxon>Pipoidea</taxon>
        <taxon>Pipidae</taxon>
        <taxon>Xenopodinae</taxon>
        <taxon>Xenopus</taxon>
        <taxon>Xenopus</taxon>
    </lineage>
</organism>
<gene>
    <name type="primary">dmrt1-a</name>
    <name type="synonym">dmrt1</name>
</gene>
<evidence type="ECO:0000255" key="1">
    <source>
        <dbReference type="PROSITE-ProRule" id="PRU00070"/>
    </source>
</evidence>
<evidence type="ECO:0000256" key="2">
    <source>
        <dbReference type="SAM" id="MobiDB-lite"/>
    </source>
</evidence>
<evidence type="ECO:0000269" key="3">
    <source>
    </source>
</evidence>
<evidence type="ECO:0000269" key="4">
    <source>
    </source>
</evidence>
<evidence type="ECO:0000269" key="5">
    <source>
    </source>
</evidence>
<evidence type="ECO:0000269" key="6">
    <source>
    </source>
</evidence>
<evidence type="ECO:0000305" key="7"/>
<evidence type="ECO:0000312" key="8">
    <source>
        <dbReference type="EMBL" id="BAE45870.1"/>
    </source>
</evidence>
<dbReference type="EMBL" id="AB201112">
    <property type="protein sequence ID" value="BAE45870.1"/>
    <property type="molecule type" value="mRNA"/>
</dbReference>
<dbReference type="EMBL" id="AB252634">
    <property type="protein sequence ID" value="BAF51968.1"/>
    <property type="molecule type" value="mRNA"/>
</dbReference>
<dbReference type="EMBL" id="BC169409">
    <property type="protein sequence ID" value="AAI69409.1"/>
    <property type="molecule type" value="mRNA"/>
</dbReference>
<dbReference type="EMBL" id="BC169413">
    <property type="protein sequence ID" value="AAI69413.1"/>
    <property type="molecule type" value="mRNA"/>
</dbReference>
<dbReference type="RefSeq" id="NP_001089969.1">
    <property type="nucleotide sequence ID" value="NM_001096500.1"/>
</dbReference>
<dbReference type="SMR" id="Q3LH63"/>
<dbReference type="GeneID" id="735040"/>
<dbReference type="KEGG" id="xla:735040"/>
<dbReference type="AGR" id="Xenbase:XB-GENE-864801"/>
<dbReference type="CTD" id="735040"/>
<dbReference type="Xenbase" id="XB-GENE-864801">
    <property type="gene designation" value="dmrt1.L"/>
</dbReference>
<dbReference type="OrthoDB" id="9946337at2759"/>
<dbReference type="Proteomes" id="UP000186698">
    <property type="component" value="Chromosome 1L"/>
</dbReference>
<dbReference type="Bgee" id="735040">
    <property type="expression patterns" value="Expressed in testis and 1 other cell type or tissue"/>
</dbReference>
<dbReference type="GO" id="GO:0005634">
    <property type="term" value="C:nucleus"/>
    <property type="evidence" value="ECO:0000318"/>
    <property type="project" value="GO_Central"/>
</dbReference>
<dbReference type="GO" id="GO:0000987">
    <property type="term" value="F:cis-regulatory region sequence-specific DNA binding"/>
    <property type="evidence" value="ECO:0000314"/>
    <property type="project" value="UniProtKB"/>
</dbReference>
<dbReference type="GO" id="GO:0000981">
    <property type="term" value="F:DNA-binding transcription factor activity, RNA polymerase II-specific"/>
    <property type="evidence" value="ECO:0000318"/>
    <property type="project" value="GO_Central"/>
</dbReference>
<dbReference type="GO" id="GO:0046872">
    <property type="term" value="F:metal ion binding"/>
    <property type="evidence" value="ECO:0007669"/>
    <property type="project" value="UniProtKB-KW"/>
</dbReference>
<dbReference type="GO" id="GO:0000978">
    <property type="term" value="F:RNA polymerase II cis-regulatory region sequence-specific DNA binding"/>
    <property type="evidence" value="ECO:0000318"/>
    <property type="project" value="GO_Central"/>
</dbReference>
<dbReference type="GO" id="GO:0030154">
    <property type="term" value="P:cell differentiation"/>
    <property type="evidence" value="ECO:0007669"/>
    <property type="project" value="UniProtKB-KW"/>
</dbReference>
<dbReference type="GO" id="GO:0008584">
    <property type="term" value="P:male gonad development"/>
    <property type="evidence" value="ECO:0000315"/>
    <property type="project" value="UniProtKB"/>
</dbReference>
<dbReference type="GO" id="GO:0030238">
    <property type="term" value="P:male sex determination"/>
    <property type="evidence" value="ECO:0000315"/>
    <property type="project" value="UniProtKB"/>
</dbReference>
<dbReference type="GO" id="GO:0046661">
    <property type="term" value="P:male sex differentiation"/>
    <property type="evidence" value="ECO:0000315"/>
    <property type="project" value="UniProtKB"/>
</dbReference>
<dbReference type="GO" id="GO:0045893">
    <property type="term" value="P:positive regulation of DNA-templated transcription"/>
    <property type="evidence" value="ECO:0000315"/>
    <property type="project" value="UniProtKB"/>
</dbReference>
<dbReference type="GO" id="GO:0006357">
    <property type="term" value="P:regulation of transcription by RNA polymerase II"/>
    <property type="evidence" value="ECO:0000314"/>
    <property type="project" value="UniProtKB"/>
</dbReference>
<dbReference type="GO" id="GO:0007548">
    <property type="term" value="P:sex differentiation"/>
    <property type="evidence" value="ECO:0000318"/>
    <property type="project" value="GO_Central"/>
</dbReference>
<dbReference type="FunFam" id="4.10.1040.10:FF:000001">
    <property type="entry name" value="doublesex- and mab-3-related transcription factor 1"/>
    <property type="match status" value="1"/>
</dbReference>
<dbReference type="Gene3D" id="4.10.1040.10">
    <property type="entry name" value="DM DNA-binding domain"/>
    <property type="match status" value="1"/>
</dbReference>
<dbReference type="InterPro" id="IPR001275">
    <property type="entry name" value="DM_DNA-bd"/>
</dbReference>
<dbReference type="InterPro" id="IPR036407">
    <property type="entry name" value="DM_DNA-bd_sf"/>
</dbReference>
<dbReference type="InterPro" id="IPR026607">
    <property type="entry name" value="DMRT"/>
</dbReference>
<dbReference type="InterPro" id="IPR022114">
    <property type="entry name" value="DMRT1-like"/>
</dbReference>
<dbReference type="PANTHER" id="PTHR12322">
    <property type="entry name" value="DOUBLESEX AND MAB-3 RELATED TRANSCRIPTION FACTOR DMRT"/>
    <property type="match status" value="1"/>
</dbReference>
<dbReference type="PANTHER" id="PTHR12322:SF70">
    <property type="entry name" value="DOUBLESEX- AND MAB-3-RELATED TRANSCRIPTION FACTOR 1"/>
    <property type="match status" value="1"/>
</dbReference>
<dbReference type="Pfam" id="PF00751">
    <property type="entry name" value="DM"/>
    <property type="match status" value="1"/>
</dbReference>
<dbReference type="Pfam" id="PF12374">
    <property type="entry name" value="Dmrt1"/>
    <property type="match status" value="1"/>
</dbReference>
<dbReference type="SMART" id="SM00301">
    <property type="entry name" value="DM"/>
    <property type="match status" value="1"/>
</dbReference>
<dbReference type="SUPFAM" id="SSF82927">
    <property type="entry name" value="Cysteine-rich DNA binding domain, (DM domain)"/>
    <property type="match status" value="1"/>
</dbReference>
<dbReference type="PROSITE" id="PS40000">
    <property type="entry name" value="DM_1"/>
    <property type="match status" value="1"/>
</dbReference>
<dbReference type="PROSITE" id="PS50809">
    <property type="entry name" value="DM_2"/>
    <property type="match status" value="1"/>
</dbReference>
<comment type="function">
    <text evidence="4 6">Transcription factor that plays a key role in male sex determination and differentiation by controlling testis development and germ cell proliferation. Acts both as a transcription repressor and activator.</text>
</comment>
<comment type="subcellular location">
    <subcellularLocation>
        <location evidence="1">Nucleus</location>
    </subcellularLocation>
</comment>
<comment type="tissue specificity">
    <text evidence="3 4 6">Expressed throughout the embryo during early development, becoming restricted to the primordial gonads in stage 52 tadpoles. Expressed exclusively in the primordial gonads of both ZW and ZZ tadpoles. Specifically expressed in the somatic cells surrounding primordial germ cells in gonad at stage 50 during sex determination in ZZ and ZW tadpoles (at protein level).</text>
</comment>
<comment type="developmental stage">
    <text evidence="3 4 5">Expressed both maternally and zygotically. Expression in maintained in the ZW and ZZ gonads.</text>
</comment>
<comment type="similarity">
    <text evidence="7">Belongs to the DMRT family.</text>
</comment>
<feature type="chain" id="PRO_0000284732" description="Doublesex- and mab-3-related transcription factor 1A">
    <location>
        <begin position="1"/>
        <end position="336"/>
    </location>
</feature>
<feature type="DNA-binding region" description="DM" evidence="1">
    <location>
        <begin position="32"/>
        <end position="79"/>
    </location>
</feature>
<feature type="region of interest" description="Disordered" evidence="2">
    <location>
        <begin position="1"/>
        <end position="28"/>
    </location>
</feature>
<feature type="region of interest" description="Disordered" evidence="2">
    <location>
        <begin position="117"/>
        <end position="136"/>
    </location>
</feature>
<feature type="region of interest" description="Disordered" evidence="2">
    <location>
        <begin position="285"/>
        <end position="336"/>
    </location>
</feature>
<feature type="compositionally biased region" description="Polar residues" evidence="2">
    <location>
        <begin position="1"/>
        <end position="17"/>
    </location>
</feature>
<feature type="compositionally biased region" description="Low complexity" evidence="2">
    <location>
        <begin position="119"/>
        <end position="135"/>
    </location>
</feature>
<feature type="compositionally biased region" description="Low complexity" evidence="2">
    <location>
        <begin position="295"/>
        <end position="310"/>
    </location>
</feature>
<feature type="compositionally biased region" description="Polar residues" evidence="2">
    <location>
        <begin position="318"/>
        <end position="336"/>
    </location>
</feature>
<accession>Q3LH63</accession>
<accession>A4PBN6</accession>
<accession>B7ZPD0</accession>